<name>PEX21_CANGA</name>
<keyword id="KW-0963">Cytoplasm</keyword>
<keyword id="KW-0576">Peroxisome</keyword>
<keyword id="KW-0653">Protein transport</keyword>
<keyword id="KW-1185">Reference proteome</keyword>
<keyword id="KW-0882">Thioester bond</keyword>
<keyword id="KW-0813">Transport</keyword>
<keyword id="KW-0832">Ubl conjugation</keyword>
<comment type="function">
    <text evidence="2 3">Mediates peroxisomal import of proteins containing a C-terminal PTS2-type peroxisomal targeting signal via its interaction with PEX7 (By similarity). Interaction with PEX7 only takes place when PEX7 is associated with cargo proteins containing a PTS2 peroxisomal targeting signal (By similarity). PEX7 along with PTS2-containing cargo proteins are then translocated through the PEX13-PEX14 docking complex together with PEX21 (By similarity).</text>
</comment>
<comment type="subunit">
    <text evidence="2">Interacts with PEX7.</text>
</comment>
<comment type="subcellular location">
    <subcellularLocation>
        <location evidence="2">Cytoplasm</location>
        <location evidence="2">Cytosol</location>
    </subcellularLocation>
    <subcellularLocation>
        <location evidence="2">Peroxisome</location>
    </subcellularLocation>
    <text evidence="2">Cycles between the cytosol and the peroxisome.</text>
</comment>
<comment type="PTM">
    <text evidence="1">Monoubiquitinated at Cys-5; acts as a signal for PEX21 extraction and is required for proper export from peroxisomes and recycling.</text>
</comment>
<comment type="similarity">
    <text evidence="4">Belongs to the peroxin-21 family.</text>
</comment>
<sequence length="232" mass="26704">MSQYCAADPIQRMVSRKGPYLDTQQQRVYKHRSGTGHGTNIRQPTTGIVEATFLQNNSGMNAVHPTTLNVQTHNAHATGRTIAKSVDTNSWVNDFSSMKVQDPLEFADSYKNLYKQYEQKQFHNTVPAQCPRNLYIPTVTRPQTTLNIVDHHEDKSSAVDQLIDDEFEKIEEEVKDQNQKLEFQESAQSFIEICERSQMKEKLQRSKFFQVMQKVSDGEATIRQDGENYVIR</sequence>
<protein>
    <recommendedName>
        <fullName>Peroxisomal protein PEX21</fullName>
    </recommendedName>
    <alternativeName>
        <fullName>Peroxin-21</fullName>
    </alternativeName>
</protein>
<organism>
    <name type="scientific">Candida glabrata (strain ATCC 2001 / BCRC 20586 / JCM 3761 / NBRC 0622 / NRRL Y-65 / CBS 138)</name>
    <name type="common">Yeast</name>
    <name type="synonym">Nakaseomyces glabratus</name>
    <dbReference type="NCBI Taxonomy" id="284593"/>
    <lineage>
        <taxon>Eukaryota</taxon>
        <taxon>Fungi</taxon>
        <taxon>Dikarya</taxon>
        <taxon>Ascomycota</taxon>
        <taxon>Saccharomycotina</taxon>
        <taxon>Saccharomycetes</taxon>
        <taxon>Saccharomycetales</taxon>
        <taxon>Saccharomycetaceae</taxon>
        <taxon>Nakaseomyces</taxon>
    </lineage>
</organism>
<evidence type="ECO:0000250" key="1">
    <source>
        <dbReference type="UniProtKB" id="P35056"/>
    </source>
</evidence>
<evidence type="ECO:0000250" key="2">
    <source>
        <dbReference type="UniProtKB" id="P50091"/>
    </source>
</evidence>
<evidence type="ECO:0000250" key="3">
    <source>
        <dbReference type="UniProtKB" id="P50542"/>
    </source>
</evidence>
<evidence type="ECO:0000305" key="4"/>
<dbReference type="EMBL" id="CR380952">
    <property type="protein sequence ID" value="CAG59241.1"/>
    <property type="molecule type" value="Genomic_DNA"/>
</dbReference>
<dbReference type="RefSeq" id="XP_446317.1">
    <property type="nucleotide sequence ID" value="XM_446317.1"/>
</dbReference>
<dbReference type="SMR" id="Q6FTX7"/>
<dbReference type="FunCoup" id="Q6FTX7">
    <property type="interactions" value="35"/>
</dbReference>
<dbReference type="STRING" id="284593.Q6FTX7"/>
<dbReference type="EnsemblFungi" id="CAGL0F08019g-T">
    <property type="protein sequence ID" value="CAGL0F08019g-T-p1"/>
    <property type="gene ID" value="CAGL0F08019g"/>
</dbReference>
<dbReference type="GeneID" id="2887900"/>
<dbReference type="KEGG" id="cgr:2887900"/>
<dbReference type="CGD" id="CAL0131384">
    <property type="gene designation" value="PEX21"/>
</dbReference>
<dbReference type="VEuPathDB" id="FungiDB:CAGL0F08019g"/>
<dbReference type="eggNOG" id="ENOG502S8JP">
    <property type="taxonomic scope" value="Eukaryota"/>
</dbReference>
<dbReference type="HOGENOM" id="CLU_1194755_0_0_1"/>
<dbReference type="InParanoid" id="Q6FTX7"/>
<dbReference type="OMA" id="NENSTIM"/>
<dbReference type="Proteomes" id="UP000002428">
    <property type="component" value="Chromosome F"/>
</dbReference>
<dbReference type="GO" id="GO:0005829">
    <property type="term" value="C:cytosol"/>
    <property type="evidence" value="ECO:0000266"/>
    <property type="project" value="CGD"/>
</dbReference>
<dbReference type="GO" id="GO:0005777">
    <property type="term" value="C:peroxisome"/>
    <property type="evidence" value="ECO:0000266"/>
    <property type="project" value="CGD"/>
</dbReference>
<dbReference type="GO" id="GO:0015031">
    <property type="term" value="P:protein transport"/>
    <property type="evidence" value="ECO:0007669"/>
    <property type="project" value="UniProtKB-KW"/>
</dbReference>
<dbReference type="Gene3D" id="6.10.280.230">
    <property type="match status" value="1"/>
</dbReference>
<dbReference type="InterPro" id="IPR056940">
    <property type="entry name" value="PEX18_PEX21_C"/>
</dbReference>
<dbReference type="Pfam" id="PF25098">
    <property type="entry name" value="PEX18_PEX21_C"/>
    <property type="match status" value="1"/>
</dbReference>
<feature type="chain" id="PRO_0000301808" description="Peroxisomal protein PEX21">
    <location>
        <begin position="1"/>
        <end position="232"/>
    </location>
</feature>
<feature type="cross-link" description="Glycyl cysteine thioester (Cys-Gly) (interchain with G-Cter in ubiquitin)" evidence="1">
    <location>
        <position position="5"/>
    </location>
</feature>
<reference key="1">
    <citation type="journal article" date="2004" name="Nature">
        <title>Genome evolution in yeasts.</title>
        <authorList>
            <person name="Dujon B."/>
            <person name="Sherman D."/>
            <person name="Fischer G."/>
            <person name="Durrens P."/>
            <person name="Casaregola S."/>
            <person name="Lafontaine I."/>
            <person name="de Montigny J."/>
            <person name="Marck C."/>
            <person name="Neuveglise C."/>
            <person name="Talla E."/>
            <person name="Goffard N."/>
            <person name="Frangeul L."/>
            <person name="Aigle M."/>
            <person name="Anthouard V."/>
            <person name="Babour A."/>
            <person name="Barbe V."/>
            <person name="Barnay S."/>
            <person name="Blanchin S."/>
            <person name="Beckerich J.-M."/>
            <person name="Beyne E."/>
            <person name="Bleykasten C."/>
            <person name="Boisrame A."/>
            <person name="Boyer J."/>
            <person name="Cattolico L."/>
            <person name="Confanioleri F."/>
            <person name="de Daruvar A."/>
            <person name="Despons L."/>
            <person name="Fabre E."/>
            <person name="Fairhead C."/>
            <person name="Ferry-Dumazet H."/>
            <person name="Groppi A."/>
            <person name="Hantraye F."/>
            <person name="Hennequin C."/>
            <person name="Jauniaux N."/>
            <person name="Joyet P."/>
            <person name="Kachouri R."/>
            <person name="Kerrest A."/>
            <person name="Koszul R."/>
            <person name="Lemaire M."/>
            <person name="Lesur I."/>
            <person name="Ma L."/>
            <person name="Muller H."/>
            <person name="Nicaud J.-M."/>
            <person name="Nikolski M."/>
            <person name="Oztas S."/>
            <person name="Ozier-Kalogeropoulos O."/>
            <person name="Pellenz S."/>
            <person name="Potier S."/>
            <person name="Richard G.-F."/>
            <person name="Straub M.-L."/>
            <person name="Suleau A."/>
            <person name="Swennen D."/>
            <person name="Tekaia F."/>
            <person name="Wesolowski-Louvel M."/>
            <person name="Westhof E."/>
            <person name="Wirth B."/>
            <person name="Zeniou-Meyer M."/>
            <person name="Zivanovic Y."/>
            <person name="Bolotin-Fukuhara M."/>
            <person name="Thierry A."/>
            <person name="Bouchier C."/>
            <person name="Caudron B."/>
            <person name="Scarpelli C."/>
            <person name="Gaillardin C."/>
            <person name="Weissenbach J."/>
            <person name="Wincker P."/>
            <person name="Souciet J.-L."/>
        </authorList>
    </citation>
    <scope>NUCLEOTIDE SEQUENCE [LARGE SCALE GENOMIC DNA]</scope>
    <source>
        <strain>ATCC 2001 / BCRC 20586 / JCM 3761 / NBRC 0622 / NRRL Y-65 / CBS 138</strain>
    </source>
</reference>
<accession>Q6FTX7</accession>
<gene>
    <name type="primary">PEX21</name>
    <name type="ordered locus">CAGL0F08019g</name>
</gene>
<proteinExistence type="inferred from homology"/>